<protein>
    <recommendedName>
        <fullName evidence="1">Large ribosomal subunit protein uL5</fullName>
    </recommendedName>
    <alternativeName>
        <fullName evidence="2">50S ribosomal protein L5</fullName>
    </alternativeName>
</protein>
<proteinExistence type="inferred from homology"/>
<reference key="1">
    <citation type="journal article" date="2006" name="PLoS Genet.">
        <title>Comparative genomics of emerging human ehrlichiosis agents.</title>
        <authorList>
            <person name="Dunning Hotopp J.C."/>
            <person name="Lin M."/>
            <person name="Madupu R."/>
            <person name="Crabtree J."/>
            <person name="Angiuoli S.V."/>
            <person name="Eisen J.A."/>
            <person name="Seshadri R."/>
            <person name="Ren Q."/>
            <person name="Wu M."/>
            <person name="Utterback T.R."/>
            <person name="Smith S."/>
            <person name="Lewis M."/>
            <person name="Khouri H."/>
            <person name="Zhang C."/>
            <person name="Niu H."/>
            <person name="Lin Q."/>
            <person name="Ohashi N."/>
            <person name="Zhi N."/>
            <person name="Nelson W.C."/>
            <person name="Brinkac L.M."/>
            <person name="Dodson R.J."/>
            <person name="Rosovitz M.J."/>
            <person name="Sundaram J.P."/>
            <person name="Daugherty S.C."/>
            <person name="Davidsen T."/>
            <person name="Durkin A.S."/>
            <person name="Gwinn M.L."/>
            <person name="Haft D.H."/>
            <person name="Selengut J.D."/>
            <person name="Sullivan S.A."/>
            <person name="Zafar N."/>
            <person name="Zhou L."/>
            <person name="Benahmed F."/>
            <person name="Forberger H."/>
            <person name="Halpin R."/>
            <person name="Mulligan S."/>
            <person name="Robinson J."/>
            <person name="White O."/>
            <person name="Rikihisa Y."/>
            <person name="Tettelin H."/>
        </authorList>
    </citation>
    <scope>NUCLEOTIDE SEQUENCE [LARGE SCALE GENOMIC DNA]</scope>
    <source>
        <strain>HZ</strain>
    </source>
</reference>
<gene>
    <name evidence="1" type="primary">rplE</name>
    <name type="ordered locus">APH_0292</name>
</gene>
<organism>
    <name type="scientific">Anaplasma phagocytophilum (strain HZ)</name>
    <dbReference type="NCBI Taxonomy" id="212042"/>
    <lineage>
        <taxon>Bacteria</taxon>
        <taxon>Pseudomonadati</taxon>
        <taxon>Pseudomonadota</taxon>
        <taxon>Alphaproteobacteria</taxon>
        <taxon>Rickettsiales</taxon>
        <taxon>Anaplasmataceae</taxon>
        <taxon>Anaplasma</taxon>
        <taxon>phagocytophilum group</taxon>
    </lineage>
</organism>
<dbReference type="EMBL" id="CP000235">
    <property type="protein sequence ID" value="ABD43244.1"/>
    <property type="molecule type" value="Genomic_DNA"/>
</dbReference>
<dbReference type="RefSeq" id="WP_011450427.1">
    <property type="nucleotide sequence ID" value="NC_007797.1"/>
</dbReference>
<dbReference type="SMR" id="Q2GL47"/>
<dbReference type="STRING" id="212042.APH_0292"/>
<dbReference type="PaxDb" id="212042-APH_0292"/>
<dbReference type="EnsemblBacteria" id="ABD43244">
    <property type="protein sequence ID" value="ABD43244"/>
    <property type="gene ID" value="APH_0292"/>
</dbReference>
<dbReference type="GeneID" id="92747511"/>
<dbReference type="KEGG" id="aph:APH_0292"/>
<dbReference type="eggNOG" id="COG0094">
    <property type="taxonomic scope" value="Bacteria"/>
</dbReference>
<dbReference type="HOGENOM" id="CLU_061015_2_1_5"/>
<dbReference type="Proteomes" id="UP000001943">
    <property type="component" value="Chromosome"/>
</dbReference>
<dbReference type="GO" id="GO:1990904">
    <property type="term" value="C:ribonucleoprotein complex"/>
    <property type="evidence" value="ECO:0007669"/>
    <property type="project" value="UniProtKB-KW"/>
</dbReference>
<dbReference type="GO" id="GO:0005840">
    <property type="term" value="C:ribosome"/>
    <property type="evidence" value="ECO:0007669"/>
    <property type="project" value="UniProtKB-KW"/>
</dbReference>
<dbReference type="GO" id="GO:0019843">
    <property type="term" value="F:rRNA binding"/>
    <property type="evidence" value="ECO:0007669"/>
    <property type="project" value="UniProtKB-UniRule"/>
</dbReference>
<dbReference type="GO" id="GO:0003735">
    <property type="term" value="F:structural constituent of ribosome"/>
    <property type="evidence" value="ECO:0007669"/>
    <property type="project" value="InterPro"/>
</dbReference>
<dbReference type="GO" id="GO:0000049">
    <property type="term" value="F:tRNA binding"/>
    <property type="evidence" value="ECO:0007669"/>
    <property type="project" value="UniProtKB-UniRule"/>
</dbReference>
<dbReference type="GO" id="GO:0006412">
    <property type="term" value="P:translation"/>
    <property type="evidence" value="ECO:0007669"/>
    <property type="project" value="UniProtKB-UniRule"/>
</dbReference>
<dbReference type="FunFam" id="3.30.1440.10:FF:000001">
    <property type="entry name" value="50S ribosomal protein L5"/>
    <property type="match status" value="1"/>
</dbReference>
<dbReference type="Gene3D" id="3.30.1440.10">
    <property type="match status" value="1"/>
</dbReference>
<dbReference type="HAMAP" id="MF_01333_B">
    <property type="entry name" value="Ribosomal_uL5_B"/>
    <property type="match status" value="1"/>
</dbReference>
<dbReference type="InterPro" id="IPR002132">
    <property type="entry name" value="Ribosomal_uL5"/>
</dbReference>
<dbReference type="InterPro" id="IPR020930">
    <property type="entry name" value="Ribosomal_uL5_bac-type"/>
</dbReference>
<dbReference type="InterPro" id="IPR031309">
    <property type="entry name" value="Ribosomal_uL5_C"/>
</dbReference>
<dbReference type="InterPro" id="IPR022803">
    <property type="entry name" value="Ribosomal_uL5_dom_sf"/>
</dbReference>
<dbReference type="InterPro" id="IPR031310">
    <property type="entry name" value="Ribosomal_uL5_N"/>
</dbReference>
<dbReference type="NCBIfam" id="NF000585">
    <property type="entry name" value="PRK00010.1"/>
    <property type="match status" value="1"/>
</dbReference>
<dbReference type="PANTHER" id="PTHR11994">
    <property type="entry name" value="60S RIBOSOMAL PROTEIN L11-RELATED"/>
    <property type="match status" value="1"/>
</dbReference>
<dbReference type="Pfam" id="PF00281">
    <property type="entry name" value="Ribosomal_L5"/>
    <property type="match status" value="1"/>
</dbReference>
<dbReference type="Pfam" id="PF00673">
    <property type="entry name" value="Ribosomal_L5_C"/>
    <property type="match status" value="1"/>
</dbReference>
<dbReference type="PIRSF" id="PIRSF002161">
    <property type="entry name" value="Ribosomal_L5"/>
    <property type="match status" value="1"/>
</dbReference>
<dbReference type="SUPFAM" id="SSF55282">
    <property type="entry name" value="RL5-like"/>
    <property type="match status" value="1"/>
</dbReference>
<name>RL5_ANAPZ</name>
<keyword id="KW-0687">Ribonucleoprotein</keyword>
<keyword id="KW-0689">Ribosomal protein</keyword>
<keyword id="KW-0694">RNA-binding</keyword>
<keyword id="KW-0699">rRNA-binding</keyword>
<keyword id="KW-0820">tRNA-binding</keyword>
<accession>Q2GL47</accession>
<comment type="function">
    <text evidence="1">This is one of the proteins that bind and probably mediate the attachment of the 5S RNA into the large ribosomal subunit, where it forms part of the central protuberance. In the 70S ribosome it contacts protein S13 of the 30S subunit (bridge B1b), connecting the 2 subunits; this bridge is implicated in subunit movement. Contacts the P site tRNA; the 5S rRNA and some of its associated proteins might help stabilize positioning of ribosome-bound tRNAs.</text>
</comment>
<comment type="subunit">
    <text evidence="1">Part of the 50S ribosomal subunit; part of the 5S rRNA/L5/L18/L25 subcomplex. Contacts the 5S rRNA and the P site tRNA. Forms a bridge to the 30S subunit in the 70S ribosome.</text>
</comment>
<comment type="similarity">
    <text evidence="1">Belongs to the universal ribosomal protein uL5 family.</text>
</comment>
<evidence type="ECO:0000255" key="1">
    <source>
        <dbReference type="HAMAP-Rule" id="MF_01333"/>
    </source>
</evidence>
<evidence type="ECO:0000305" key="2"/>
<sequence length="177" mass="19461">MLGSLSKDAVAKSLVSRLGKKNVMQVPRVVKVCLNMGIGISAADSKVMDSCTRDLAMISAQKPVVTRARKSIAGFKIRKGFPIGCMVTLRGKRMYEFLDRLINIALPRERDFRGLSTSQLDGHGNISFGIKEHISFLEVDYDKIDKVRGLDVVIVTTATNDADAKALLLELGFPFMN</sequence>
<feature type="chain" id="PRO_0000242962" description="Large ribosomal subunit protein uL5">
    <location>
        <begin position="1"/>
        <end position="177"/>
    </location>
</feature>